<feature type="chain" id="PRO_1000195620" description="Large ribosomal subunit protein uL11">
    <location>
        <begin position="1"/>
        <end position="142"/>
    </location>
</feature>
<organism>
    <name type="scientific">Desulforudis audaxviator (strain MP104C)</name>
    <dbReference type="NCBI Taxonomy" id="477974"/>
    <lineage>
        <taxon>Bacteria</taxon>
        <taxon>Bacillati</taxon>
        <taxon>Bacillota</taxon>
        <taxon>Clostridia</taxon>
        <taxon>Thermoanaerobacterales</taxon>
        <taxon>Candidatus Desulforudaceae</taxon>
        <taxon>Candidatus Desulforudis</taxon>
    </lineage>
</organism>
<evidence type="ECO:0000255" key="1">
    <source>
        <dbReference type="HAMAP-Rule" id="MF_00736"/>
    </source>
</evidence>
<evidence type="ECO:0000305" key="2"/>
<gene>
    <name evidence="1" type="primary">rplK</name>
    <name type="ordered locus">Daud_0211</name>
</gene>
<keyword id="KW-0488">Methylation</keyword>
<keyword id="KW-1185">Reference proteome</keyword>
<keyword id="KW-0687">Ribonucleoprotein</keyword>
<keyword id="KW-0689">Ribosomal protein</keyword>
<keyword id="KW-0694">RNA-binding</keyword>
<keyword id="KW-0699">rRNA-binding</keyword>
<accession>B1I1L2</accession>
<reference key="1">
    <citation type="submission" date="2007-10" db="EMBL/GenBank/DDBJ databases">
        <title>Complete sequence of chromosome of Desulforudis audaxviator MP104C.</title>
        <authorList>
            <person name="Copeland A."/>
            <person name="Lucas S."/>
            <person name="Lapidus A."/>
            <person name="Barry K."/>
            <person name="Glavina del Rio T."/>
            <person name="Dalin E."/>
            <person name="Tice H."/>
            <person name="Bruce D."/>
            <person name="Pitluck S."/>
            <person name="Lowry S.R."/>
            <person name="Larimer F."/>
            <person name="Land M.L."/>
            <person name="Hauser L."/>
            <person name="Kyrpides N."/>
            <person name="Ivanova N.N."/>
            <person name="Richardson P."/>
        </authorList>
    </citation>
    <scope>NUCLEOTIDE SEQUENCE [LARGE SCALE GENOMIC DNA]</scope>
    <source>
        <strain>MP104C</strain>
    </source>
</reference>
<comment type="function">
    <text evidence="1">Forms part of the ribosomal stalk which helps the ribosome interact with GTP-bound translation factors.</text>
</comment>
<comment type="subunit">
    <text evidence="1">Part of the ribosomal stalk of the 50S ribosomal subunit. Interacts with L10 and the large rRNA to form the base of the stalk. L10 forms an elongated spine to which L12 dimers bind in a sequential fashion forming a multimeric L10(L12)X complex.</text>
</comment>
<comment type="PTM">
    <text evidence="1">One or more lysine residues are methylated.</text>
</comment>
<comment type="similarity">
    <text evidence="1">Belongs to the universal ribosomal protein uL11 family.</text>
</comment>
<name>RL11_DESAP</name>
<sequence>MAKKVMAMVKLQIPAGKATPAPPVGPALGQHGVNIMAFVKEYNERTAGQVGLIIPVEITVYADRTFSFVTKTPPASVLLKKAAGIETASGQPHVKKVGKVTRTKVREIAELKMPDLNAADVEAAVRMVEGTARSMGIEIVEG</sequence>
<proteinExistence type="inferred from homology"/>
<dbReference type="EMBL" id="CP000860">
    <property type="protein sequence ID" value="ACA58772.1"/>
    <property type="molecule type" value="Genomic_DNA"/>
</dbReference>
<dbReference type="RefSeq" id="WP_012301365.1">
    <property type="nucleotide sequence ID" value="NC_010424.1"/>
</dbReference>
<dbReference type="SMR" id="B1I1L2"/>
<dbReference type="STRING" id="477974.Daud_0211"/>
<dbReference type="KEGG" id="dau:Daud_0211"/>
<dbReference type="eggNOG" id="COG0080">
    <property type="taxonomic scope" value="Bacteria"/>
</dbReference>
<dbReference type="HOGENOM" id="CLU_074237_2_1_9"/>
<dbReference type="OrthoDB" id="9802408at2"/>
<dbReference type="Proteomes" id="UP000008544">
    <property type="component" value="Chromosome"/>
</dbReference>
<dbReference type="GO" id="GO:0022625">
    <property type="term" value="C:cytosolic large ribosomal subunit"/>
    <property type="evidence" value="ECO:0007669"/>
    <property type="project" value="TreeGrafter"/>
</dbReference>
<dbReference type="GO" id="GO:0070180">
    <property type="term" value="F:large ribosomal subunit rRNA binding"/>
    <property type="evidence" value="ECO:0007669"/>
    <property type="project" value="UniProtKB-UniRule"/>
</dbReference>
<dbReference type="GO" id="GO:0003735">
    <property type="term" value="F:structural constituent of ribosome"/>
    <property type="evidence" value="ECO:0007669"/>
    <property type="project" value="InterPro"/>
</dbReference>
<dbReference type="GO" id="GO:0006412">
    <property type="term" value="P:translation"/>
    <property type="evidence" value="ECO:0007669"/>
    <property type="project" value="UniProtKB-UniRule"/>
</dbReference>
<dbReference type="CDD" id="cd00349">
    <property type="entry name" value="Ribosomal_L11"/>
    <property type="match status" value="1"/>
</dbReference>
<dbReference type="FunFam" id="1.10.10.250:FF:000001">
    <property type="entry name" value="50S ribosomal protein L11"/>
    <property type="match status" value="1"/>
</dbReference>
<dbReference type="FunFam" id="3.30.1550.10:FF:000001">
    <property type="entry name" value="50S ribosomal protein L11"/>
    <property type="match status" value="1"/>
</dbReference>
<dbReference type="Gene3D" id="1.10.10.250">
    <property type="entry name" value="Ribosomal protein L11, C-terminal domain"/>
    <property type="match status" value="1"/>
</dbReference>
<dbReference type="Gene3D" id="3.30.1550.10">
    <property type="entry name" value="Ribosomal protein L11/L12, N-terminal domain"/>
    <property type="match status" value="1"/>
</dbReference>
<dbReference type="HAMAP" id="MF_00736">
    <property type="entry name" value="Ribosomal_uL11"/>
    <property type="match status" value="1"/>
</dbReference>
<dbReference type="InterPro" id="IPR000911">
    <property type="entry name" value="Ribosomal_uL11"/>
</dbReference>
<dbReference type="InterPro" id="IPR006519">
    <property type="entry name" value="Ribosomal_uL11_bac-typ"/>
</dbReference>
<dbReference type="InterPro" id="IPR020783">
    <property type="entry name" value="Ribosomal_uL11_C"/>
</dbReference>
<dbReference type="InterPro" id="IPR036769">
    <property type="entry name" value="Ribosomal_uL11_C_sf"/>
</dbReference>
<dbReference type="InterPro" id="IPR020785">
    <property type="entry name" value="Ribosomal_uL11_CS"/>
</dbReference>
<dbReference type="InterPro" id="IPR020784">
    <property type="entry name" value="Ribosomal_uL11_N"/>
</dbReference>
<dbReference type="InterPro" id="IPR036796">
    <property type="entry name" value="Ribosomal_uL11_N_sf"/>
</dbReference>
<dbReference type="NCBIfam" id="TIGR01632">
    <property type="entry name" value="L11_bact"/>
    <property type="match status" value="1"/>
</dbReference>
<dbReference type="PANTHER" id="PTHR11661">
    <property type="entry name" value="60S RIBOSOMAL PROTEIN L12"/>
    <property type="match status" value="1"/>
</dbReference>
<dbReference type="PANTHER" id="PTHR11661:SF1">
    <property type="entry name" value="LARGE RIBOSOMAL SUBUNIT PROTEIN UL11M"/>
    <property type="match status" value="1"/>
</dbReference>
<dbReference type="Pfam" id="PF00298">
    <property type="entry name" value="Ribosomal_L11"/>
    <property type="match status" value="1"/>
</dbReference>
<dbReference type="Pfam" id="PF03946">
    <property type="entry name" value="Ribosomal_L11_N"/>
    <property type="match status" value="1"/>
</dbReference>
<dbReference type="SMART" id="SM00649">
    <property type="entry name" value="RL11"/>
    <property type="match status" value="1"/>
</dbReference>
<dbReference type="SUPFAM" id="SSF54747">
    <property type="entry name" value="Ribosomal L11/L12e N-terminal domain"/>
    <property type="match status" value="1"/>
</dbReference>
<dbReference type="SUPFAM" id="SSF46906">
    <property type="entry name" value="Ribosomal protein L11, C-terminal domain"/>
    <property type="match status" value="1"/>
</dbReference>
<dbReference type="PROSITE" id="PS00359">
    <property type="entry name" value="RIBOSOMAL_L11"/>
    <property type="match status" value="1"/>
</dbReference>
<protein>
    <recommendedName>
        <fullName evidence="1">Large ribosomal subunit protein uL11</fullName>
    </recommendedName>
    <alternativeName>
        <fullName evidence="2">50S ribosomal protein L11</fullName>
    </alternativeName>
</protein>